<accession>Q8MEY4</accession>
<feature type="chain" id="PRO_0000143320" description="Maturase K">
    <location>
        <begin position="1"/>
        <end position="499"/>
    </location>
</feature>
<protein>
    <recommendedName>
        <fullName evidence="1">Maturase K</fullName>
    </recommendedName>
    <alternativeName>
        <fullName evidence="1">Intron maturase</fullName>
    </alternativeName>
</protein>
<geneLocation type="chloroplast"/>
<sequence length="499" mass="59649">MDKLQRDGKEDTSRQRRFLYLLLFQEDLYAIAYDHYFNRSSSFEPMENSSSNDRFSFLTVKRSISRIRQQNGSIIPFVNCDQNRLVGHSRSFYSELVLGGLTAVPEVPFSIRSKHSLEGMNEWTSFRSINSIFPLMEDKIPHSNFLLDIQIPHLTHPEILVRTFRRWIQDAPFLNLLRSVLHEHRNLTISSNLDQLILIASKENKRLSLFLWNYYAYECESLLVPLWKRFSHSRSLPYESFIERTPFYQKIKNIVIFYHKYIKKSLWFLKDPSIHYVKYRERSIIALRGTYLLVKKWRYHLTNFWQCHFHLWLQPYRIYIDEFSNNCFSLLGYLLSVKMKTSVVRIRMLDDSFITHLITKEFDPIAPTTLLIRSLAKERFCDISGHPISRLAWTGLTDDDILDRFDRIWRNIFHYHSGSSKKDGLYRMKYILRLPCAKTLACKHKSTIRVVRERFGSELFTKSFPKERESILLPFSKTRSQRERIWHSDIIQRNPLVNS</sequence>
<name>MATK_CERME</name>
<reference key="1">
    <citation type="submission" date="2000-06" db="EMBL/GenBank/DDBJ databases">
        <title>Chloroplast matK sequence data reconfirm the monophyly of extant gymnosperms and the coniferophytic origin of Gnetales.</title>
        <authorList>
            <person name="Chaw S.-M."/>
            <person name="Hu S.-H."/>
        </authorList>
    </citation>
    <scope>NUCLEOTIDE SEQUENCE [GENOMIC DNA]</scope>
</reference>
<gene>
    <name evidence="1" type="primary">matK</name>
</gene>
<keyword id="KW-0150">Chloroplast</keyword>
<keyword id="KW-0507">mRNA processing</keyword>
<keyword id="KW-0934">Plastid</keyword>
<keyword id="KW-0694">RNA-binding</keyword>
<keyword id="KW-0819">tRNA processing</keyword>
<evidence type="ECO:0000255" key="1">
    <source>
        <dbReference type="HAMAP-Rule" id="MF_01390"/>
    </source>
</evidence>
<organism>
    <name type="scientific">Ceratozamia mexicana</name>
    <name type="common">Mexican horncone</name>
    <dbReference type="NCBI Taxonomy" id="41994"/>
    <lineage>
        <taxon>Eukaryota</taxon>
        <taxon>Viridiplantae</taxon>
        <taxon>Streptophyta</taxon>
        <taxon>Embryophyta</taxon>
        <taxon>Tracheophyta</taxon>
        <taxon>Spermatophyta</taxon>
        <taxon>Cycadidae</taxon>
        <taxon>Cycadales</taxon>
        <taxon>Zamiaceae</taxon>
        <taxon>Ceratozamia</taxon>
    </lineage>
</organism>
<proteinExistence type="inferred from homology"/>
<comment type="function">
    <text evidence="1">Usually encoded in the trnK tRNA gene intron. Probably assists in splicing its own and other chloroplast group II introns.</text>
</comment>
<comment type="subcellular location">
    <subcellularLocation>
        <location>Plastid</location>
        <location>Chloroplast</location>
    </subcellularLocation>
</comment>
<comment type="similarity">
    <text evidence="1">Belongs to the intron maturase 2 family. MatK subfamily.</text>
</comment>
<dbReference type="EMBL" id="AF279794">
    <property type="protein sequence ID" value="AAK69117.1"/>
    <property type="molecule type" value="Genomic_DNA"/>
</dbReference>
<dbReference type="GO" id="GO:0009507">
    <property type="term" value="C:chloroplast"/>
    <property type="evidence" value="ECO:0007669"/>
    <property type="project" value="UniProtKB-SubCell"/>
</dbReference>
<dbReference type="GO" id="GO:0003723">
    <property type="term" value="F:RNA binding"/>
    <property type="evidence" value="ECO:0007669"/>
    <property type="project" value="UniProtKB-KW"/>
</dbReference>
<dbReference type="GO" id="GO:0006397">
    <property type="term" value="P:mRNA processing"/>
    <property type="evidence" value="ECO:0007669"/>
    <property type="project" value="UniProtKB-KW"/>
</dbReference>
<dbReference type="GO" id="GO:0008380">
    <property type="term" value="P:RNA splicing"/>
    <property type="evidence" value="ECO:0007669"/>
    <property type="project" value="UniProtKB-UniRule"/>
</dbReference>
<dbReference type="GO" id="GO:0008033">
    <property type="term" value="P:tRNA processing"/>
    <property type="evidence" value="ECO:0007669"/>
    <property type="project" value="UniProtKB-KW"/>
</dbReference>
<dbReference type="HAMAP" id="MF_01390">
    <property type="entry name" value="MatK"/>
    <property type="match status" value="1"/>
</dbReference>
<dbReference type="InterPro" id="IPR024937">
    <property type="entry name" value="Domain_X"/>
</dbReference>
<dbReference type="InterPro" id="IPR002866">
    <property type="entry name" value="Maturase_MatK"/>
</dbReference>
<dbReference type="InterPro" id="IPR024942">
    <property type="entry name" value="Maturase_MatK_N"/>
</dbReference>
<dbReference type="PANTHER" id="PTHR34811">
    <property type="entry name" value="MATURASE K"/>
    <property type="match status" value="1"/>
</dbReference>
<dbReference type="PANTHER" id="PTHR34811:SF1">
    <property type="entry name" value="MATURASE K"/>
    <property type="match status" value="1"/>
</dbReference>
<dbReference type="Pfam" id="PF01348">
    <property type="entry name" value="Intron_maturas2"/>
    <property type="match status" value="1"/>
</dbReference>
<dbReference type="Pfam" id="PF01824">
    <property type="entry name" value="MatK_N"/>
    <property type="match status" value="1"/>
</dbReference>